<keyword id="KW-0507">mRNA processing</keyword>
<keyword id="KW-0508">mRNA splicing</keyword>
<keyword id="KW-0539">Nucleus</keyword>
<keyword id="KW-0597">Phosphoprotein</keyword>
<keyword id="KW-1185">Reference proteome</keyword>
<keyword id="KW-0747">Spliceosome</keyword>
<feature type="chain" id="PRO_0000302007" description="Pre-mRNA-splicing factor CWC22 homolog">
    <location>
        <begin position="1"/>
        <end position="908"/>
    </location>
</feature>
<feature type="domain" description="MIF4G" evidence="3">
    <location>
        <begin position="163"/>
        <end position="346"/>
    </location>
</feature>
<feature type="domain" description="MI" evidence="3">
    <location>
        <begin position="454"/>
        <end position="570"/>
    </location>
</feature>
<feature type="region of interest" description="Disordered" evidence="4">
    <location>
        <begin position="1"/>
        <end position="130"/>
    </location>
</feature>
<feature type="region of interest" description="Disordered" evidence="4">
    <location>
        <begin position="404"/>
        <end position="443"/>
    </location>
</feature>
<feature type="region of interest" description="Disordered" evidence="4">
    <location>
        <begin position="654"/>
        <end position="908"/>
    </location>
</feature>
<feature type="compositionally biased region" description="Basic and acidic residues" evidence="4">
    <location>
        <begin position="28"/>
        <end position="56"/>
    </location>
</feature>
<feature type="compositionally biased region" description="Basic and acidic residues" evidence="4">
    <location>
        <begin position="66"/>
        <end position="85"/>
    </location>
</feature>
<feature type="compositionally biased region" description="Polar residues" evidence="4">
    <location>
        <begin position="100"/>
        <end position="109"/>
    </location>
</feature>
<feature type="compositionally biased region" description="Basic and acidic residues" evidence="4">
    <location>
        <begin position="113"/>
        <end position="122"/>
    </location>
</feature>
<feature type="compositionally biased region" description="Acidic residues" evidence="4">
    <location>
        <begin position="407"/>
        <end position="438"/>
    </location>
</feature>
<feature type="compositionally biased region" description="Low complexity" evidence="4">
    <location>
        <begin position="666"/>
        <end position="680"/>
    </location>
</feature>
<feature type="compositionally biased region" description="Low complexity" evidence="4">
    <location>
        <begin position="703"/>
        <end position="714"/>
    </location>
</feature>
<feature type="compositionally biased region" description="Basic and acidic residues" evidence="4">
    <location>
        <begin position="726"/>
        <end position="792"/>
    </location>
</feature>
<feature type="compositionally biased region" description="Basic and acidic residues" evidence="4">
    <location>
        <begin position="801"/>
        <end position="817"/>
    </location>
</feature>
<feature type="compositionally biased region" description="Basic and acidic residues" evidence="4">
    <location>
        <begin position="826"/>
        <end position="908"/>
    </location>
</feature>
<feature type="modified residue" description="Phosphoserine" evidence="2">
    <location>
        <position position="39"/>
    </location>
</feature>
<feature type="modified residue" description="Phosphoserine" evidence="2">
    <location>
        <position position="61"/>
    </location>
</feature>
<feature type="modified residue" description="Phosphoserine" evidence="1">
    <location>
        <position position="107"/>
    </location>
</feature>
<feature type="modified residue" description="Phosphoserine" evidence="2">
    <location>
        <position position="786"/>
    </location>
</feature>
<feature type="modified residue" description="Phosphoserine" evidence="2">
    <location>
        <position position="829"/>
    </location>
</feature>
<protein>
    <recommendedName>
        <fullName>Pre-mRNA-splicing factor CWC22 homolog</fullName>
    </recommendedName>
    <alternativeName>
        <fullName>Nucampholin homolog</fullName>
    </alternativeName>
</protein>
<comment type="function">
    <text evidence="2">Required for pre-mRNA splicing as component of the spliceosome. As a component of the minor spliceosome, involved in the splicing of U12-type introns in pre-mRNAs (By similarity). Promotes exon-junction complex (EJC) assembly. Hinders EIF4A3 from non-specifically binding RNA and escorts it to the splicing machinery to promote EJC assembly on mature mRNAs. Through its role in EJC assembly, required for nonsense-mediated mRNA decay.</text>
</comment>
<comment type="subunit">
    <text evidence="2">Component of the pre-catalytic spliceosome B and the catalytic spliceosome C complexes. Component of the minor spliceosome, which splices U12-type introns (By similarity). Interacts with EIF4A3 and PRPF19 in an RNA-independent manner. Direct interaction with EIF4A3 is mediated by the MIF4G domain. Full interaction with EIF4A3 occurs only when EIF4A3 is not part of the EJC and prevents EIF4A3 binding to RNA.</text>
</comment>
<comment type="subcellular location">
    <subcellularLocation>
        <location evidence="2">Nucleus</location>
    </subcellularLocation>
    <subcellularLocation>
        <location evidence="2">Nucleus speckle</location>
    </subcellularLocation>
    <text evidence="2">Concentrates around speckles, which are sites of pre-mRNA synthesis and processing, where it colocalizes with EJC core proteins.</text>
</comment>
<comment type="similarity">
    <text evidence="5">Belongs to the CWC22 family.</text>
</comment>
<gene>
    <name type="primary">CWC22</name>
    <name type="synonym">NCM</name>
</gene>
<reference key="1">
    <citation type="submission" date="2004-11" db="EMBL/GenBank/DDBJ databases">
        <authorList>
            <consortium name="The German cDNA consortium"/>
        </authorList>
    </citation>
    <scope>NUCLEOTIDE SEQUENCE [LARGE SCALE MRNA]</scope>
    <source>
        <tissue>Brain cortex</tissue>
    </source>
</reference>
<organism>
    <name type="scientific">Pongo abelii</name>
    <name type="common">Sumatran orangutan</name>
    <name type="synonym">Pongo pygmaeus abelii</name>
    <dbReference type="NCBI Taxonomy" id="9601"/>
    <lineage>
        <taxon>Eukaryota</taxon>
        <taxon>Metazoa</taxon>
        <taxon>Chordata</taxon>
        <taxon>Craniata</taxon>
        <taxon>Vertebrata</taxon>
        <taxon>Euteleostomi</taxon>
        <taxon>Mammalia</taxon>
        <taxon>Eutheria</taxon>
        <taxon>Euarchontoglires</taxon>
        <taxon>Primates</taxon>
        <taxon>Haplorrhini</taxon>
        <taxon>Catarrhini</taxon>
        <taxon>Hominidae</taxon>
        <taxon>Pongo</taxon>
    </lineage>
</organism>
<evidence type="ECO:0000250" key="1">
    <source>
        <dbReference type="UniProtKB" id="Q8C5N3"/>
    </source>
</evidence>
<evidence type="ECO:0000250" key="2">
    <source>
        <dbReference type="UniProtKB" id="Q9HCG8"/>
    </source>
</evidence>
<evidence type="ECO:0000255" key="3">
    <source>
        <dbReference type="PROSITE-ProRule" id="PRU00698"/>
    </source>
</evidence>
<evidence type="ECO:0000256" key="4">
    <source>
        <dbReference type="SAM" id="MobiDB-lite"/>
    </source>
</evidence>
<evidence type="ECO:0000305" key="5"/>
<accession>Q5RA93</accession>
<name>CWC22_PONAB</name>
<proteinExistence type="evidence at transcript level"/>
<sequence length="908" mass="105539">MKSGVAQIKPSSGHDRRENLNSYQRNSSPEDRYEEQERSPRDRDYFDYSRSDYEHSRRGHSYDSSMESRNRDREKRRERERDTDRKRSRKSPSPGRRNPETSVTQSSPAQDEPATKKKKDELDPLLTRTGGAYIPPAKLRMMQEQITDKNSLAYQRMSWEALKKSINGLINKVNISNISIIIQELLQENIVRGRGLLSRSVLQAQSASPIFTHVYAALVAIINSKFPQIGELILKRLILNFRKGYRRNDKQLCLTASKFVAHLINQNVAHEVLCLEMLTLLLERPTDDSVEVAIGFLKECGLKLTQVSPRGINAIFGRLRNILHESEIDKRVQYMIEVMFAVRKDGFKDHPIILEGLDLVEEDDQFTHMLPLEDDYNPEDVLNVFKMDPNFMENEEKYKAIKKEILDEGDTDSNTDQDAGSSEEDEEEEEEEGEEDEEGQKVTIHDKTEINLVSFRRTIYLAIQSSLDFEECAHKLLKMEFPESQTKELCNMILDCCAQQRTYEKFFGLLAGRFCMLKKEYMESFEGIFKEQYDTIHRLETNKLRNVAKMFAHLLYTDSLPWSVLECIKLSEETTTSSSRIFVKIFFQELCEYMGLPKLNARLKDETLQPFFEGLLPRDNPRNTRFAINFFTSIGLGGLTDELREHLKNTPKVIVAQKPDVEQNKSSPSSSSSASSSSESDSSDSDSDSSDSSSESSSEESDSSSISSHSSASANDVRKKGHGKTRSKEVDKLIRNQQTNDRKQKERRQEHGHQETRTERERRSEKHRDQNSRDSNWRDPITKYTSDKDVPSERNNYSRVANDRDQEMHIDLENKHGDPKKKRGERRNSFSENEKHTHRNKDSENFRRKDRSKSREMNRRHSGSRSDEDRYQNGAERRWEKSSRYSEQSRESKKNQDRRREKSPAKQK</sequence>
<dbReference type="EMBL" id="CR859125">
    <property type="protein sequence ID" value="CAH91317.1"/>
    <property type="molecule type" value="mRNA"/>
</dbReference>
<dbReference type="RefSeq" id="NP_001125780.1">
    <property type="nucleotide sequence ID" value="NM_001132308.1"/>
</dbReference>
<dbReference type="SMR" id="Q5RA93"/>
<dbReference type="FunCoup" id="Q5RA93">
    <property type="interactions" value="3359"/>
</dbReference>
<dbReference type="STRING" id="9601.ENSPPYP00000014506"/>
<dbReference type="GeneID" id="100172707"/>
<dbReference type="KEGG" id="pon:100172707"/>
<dbReference type="CTD" id="57703"/>
<dbReference type="eggNOG" id="KOG2140">
    <property type="taxonomic scope" value="Eukaryota"/>
</dbReference>
<dbReference type="InParanoid" id="Q5RA93"/>
<dbReference type="OrthoDB" id="1924287at2759"/>
<dbReference type="Proteomes" id="UP000001595">
    <property type="component" value="Unplaced"/>
</dbReference>
<dbReference type="GO" id="GO:0016607">
    <property type="term" value="C:nuclear speck"/>
    <property type="evidence" value="ECO:0007669"/>
    <property type="project" value="UniProtKB-SubCell"/>
</dbReference>
<dbReference type="GO" id="GO:0005634">
    <property type="term" value="C:nucleus"/>
    <property type="evidence" value="ECO:0000250"/>
    <property type="project" value="UniProtKB"/>
</dbReference>
<dbReference type="GO" id="GO:0005681">
    <property type="term" value="C:spliceosomal complex"/>
    <property type="evidence" value="ECO:0000250"/>
    <property type="project" value="UniProtKB"/>
</dbReference>
<dbReference type="GO" id="GO:0071006">
    <property type="term" value="C:U2-type catalytic step 1 spliceosome"/>
    <property type="evidence" value="ECO:0000250"/>
    <property type="project" value="UniProtKB"/>
</dbReference>
<dbReference type="GO" id="GO:0071007">
    <property type="term" value="C:U2-type catalytic step 2 spliceosome"/>
    <property type="evidence" value="ECO:0000250"/>
    <property type="project" value="UniProtKB"/>
</dbReference>
<dbReference type="GO" id="GO:0071005">
    <property type="term" value="C:U2-type precatalytic spliceosome"/>
    <property type="evidence" value="ECO:0000250"/>
    <property type="project" value="UniProtKB"/>
</dbReference>
<dbReference type="GO" id="GO:0003723">
    <property type="term" value="F:RNA binding"/>
    <property type="evidence" value="ECO:0000250"/>
    <property type="project" value="UniProtKB"/>
</dbReference>
<dbReference type="GO" id="GO:0000398">
    <property type="term" value="P:mRNA splicing, via spliceosome"/>
    <property type="evidence" value="ECO:0000250"/>
    <property type="project" value="UniProtKB"/>
</dbReference>
<dbReference type="FunFam" id="1.25.40.180:FF:000004">
    <property type="entry name" value="pre-mRNA-splicing factor CWC22 homolog"/>
    <property type="match status" value="1"/>
</dbReference>
<dbReference type="Gene3D" id="1.25.40.180">
    <property type="match status" value="1"/>
</dbReference>
<dbReference type="InterPro" id="IPR016024">
    <property type="entry name" value="ARM-type_fold"/>
</dbReference>
<dbReference type="InterPro" id="IPR050781">
    <property type="entry name" value="CWC22_splicing_factor"/>
</dbReference>
<dbReference type="InterPro" id="IPR003891">
    <property type="entry name" value="Initiation_fac_eIF4g_MI"/>
</dbReference>
<dbReference type="InterPro" id="IPR003890">
    <property type="entry name" value="MIF4G-like_typ-3"/>
</dbReference>
<dbReference type="PANTHER" id="PTHR18034">
    <property type="entry name" value="CELL CYCLE CONTROL PROTEIN CWF22-RELATED"/>
    <property type="match status" value="1"/>
</dbReference>
<dbReference type="PANTHER" id="PTHR18034:SF3">
    <property type="entry name" value="PRE-MRNA-SPLICING FACTOR CWC22 HOMOLOG"/>
    <property type="match status" value="1"/>
</dbReference>
<dbReference type="Pfam" id="PF02847">
    <property type="entry name" value="MA3"/>
    <property type="match status" value="1"/>
</dbReference>
<dbReference type="Pfam" id="PF02854">
    <property type="entry name" value="MIF4G"/>
    <property type="match status" value="1"/>
</dbReference>
<dbReference type="SMART" id="SM00544">
    <property type="entry name" value="MA3"/>
    <property type="match status" value="1"/>
</dbReference>
<dbReference type="SMART" id="SM00543">
    <property type="entry name" value="MIF4G"/>
    <property type="match status" value="1"/>
</dbReference>
<dbReference type="SUPFAM" id="SSF48371">
    <property type="entry name" value="ARM repeat"/>
    <property type="match status" value="1"/>
</dbReference>
<dbReference type="PROSITE" id="PS51366">
    <property type="entry name" value="MI"/>
    <property type="match status" value="1"/>
</dbReference>